<feature type="chain" id="PRO_0000258767" description="Large ribosomal subunit protein bL35">
    <location>
        <begin position="1"/>
        <end position="66"/>
    </location>
</feature>
<feature type="region of interest" description="Disordered" evidence="2">
    <location>
        <begin position="1"/>
        <end position="20"/>
    </location>
</feature>
<feature type="compositionally biased region" description="Basic residues" evidence="2">
    <location>
        <begin position="1"/>
        <end position="16"/>
    </location>
</feature>
<sequence length="66" mass="7810">MPKQKTHRASAKRFKRTGSGGLKRFRAFTSHRFHGKTKKQRRHLRKASMVHSGDFKRIKSMVSQMR</sequence>
<proteinExistence type="inferred from homology"/>
<evidence type="ECO:0000255" key="1">
    <source>
        <dbReference type="HAMAP-Rule" id="MF_00514"/>
    </source>
</evidence>
<evidence type="ECO:0000256" key="2">
    <source>
        <dbReference type="SAM" id="MobiDB-lite"/>
    </source>
</evidence>
<evidence type="ECO:0000305" key="3"/>
<comment type="similarity">
    <text evidence="1">Belongs to the bacterial ribosomal protein bL35 family.</text>
</comment>
<accession>Q5M471</accession>
<organism>
    <name type="scientific">Streptococcus thermophilus (strain ATCC BAA-250 / LMG 18311)</name>
    <dbReference type="NCBI Taxonomy" id="264199"/>
    <lineage>
        <taxon>Bacteria</taxon>
        <taxon>Bacillati</taxon>
        <taxon>Bacillota</taxon>
        <taxon>Bacilli</taxon>
        <taxon>Lactobacillales</taxon>
        <taxon>Streptococcaceae</taxon>
        <taxon>Streptococcus</taxon>
    </lineage>
</organism>
<reference key="1">
    <citation type="journal article" date="2004" name="Nat. Biotechnol.">
        <title>Complete sequence and comparative genome analysis of the dairy bacterium Streptococcus thermophilus.</title>
        <authorList>
            <person name="Bolotin A."/>
            <person name="Quinquis B."/>
            <person name="Renault P."/>
            <person name="Sorokin A."/>
            <person name="Ehrlich S.D."/>
            <person name="Kulakauskas S."/>
            <person name="Lapidus A."/>
            <person name="Goltsman E."/>
            <person name="Mazur M."/>
            <person name="Pusch G.D."/>
            <person name="Fonstein M."/>
            <person name="Overbeek R."/>
            <person name="Kyprides N."/>
            <person name="Purnelle B."/>
            <person name="Prozzi D."/>
            <person name="Ngui K."/>
            <person name="Masuy D."/>
            <person name="Hancy F."/>
            <person name="Burteau S."/>
            <person name="Boutry M."/>
            <person name="Delcour J."/>
            <person name="Goffeau A."/>
            <person name="Hols P."/>
        </authorList>
    </citation>
    <scope>NUCLEOTIDE SEQUENCE [LARGE SCALE GENOMIC DNA]</scope>
    <source>
        <strain>ATCC BAA-250 / LMG 18311</strain>
    </source>
</reference>
<dbReference type="EMBL" id="CP000023">
    <property type="protein sequence ID" value="AAV60771.1"/>
    <property type="molecule type" value="Genomic_DNA"/>
</dbReference>
<dbReference type="RefSeq" id="WP_011226064.1">
    <property type="nucleotide sequence ID" value="NC_006448.1"/>
</dbReference>
<dbReference type="SMR" id="Q5M471"/>
<dbReference type="STRING" id="264199.stu1133"/>
<dbReference type="KEGG" id="stl:stu1133"/>
<dbReference type="eggNOG" id="COG0291">
    <property type="taxonomic scope" value="Bacteria"/>
</dbReference>
<dbReference type="HOGENOM" id="CLU_169643_3_0_9"/>
<dbReference type="Proteomes" id="UP000001170">
    <property type="component" value="Chromosome"/>
</dbReference>
<dbReference type="GO" id="GO:0022625">
    <property type="term" value="C:cytosolic large ribosomal subunit"/>
    <property type="evidence" value="ECO:0007669"/>
    <property type="project" value="TreeGrafter"/>
</dbReference>
<dbReference type="GO" id="GO:0003735">
    <property type="term" value="F:structural constituent of ribosome"/>
    <property type="evidence" value="ECO:0007669"/>
    <property type="project" value="InterPro"/>
</dbReference>
<dbReference type="GO" id="GO:0006412">
    <property type="term" value="P:translation"/>
    <property type="evidence" value="ECO:0007669"/>
    <property type="project" value="UniProtKB-UniRule"/>
</dbReference>
<dbReference type="FunFam" id="4.10.410.60:FF:000001">
    <property type="entry name" value="50S ribosomal protein L35"/>
    <property type="match status" value="1"/>
</dbReference>
<dbReference type="Gene3D" id="4.10.410.60">
    <property type="match status" value="1"/>
</dbReference>
<dbReference type="HAMAP" id="MF_00514">
    <property type="entry name" value="Ribosomal_bL35"/>
    <property type="match status" value="1"/>
</dbReference>
<dbReference type="InterPro" id="IPR001706">
    <property type="entry name" value="Ribosomal_bL35"/>
</dbReference>
<dbReference type="InterPro" id="IPR021137">
    <property type="entry name" value="Ribosomal_bL35-like"/>
</dbReference>
<dbReference type="InterPro" id="IPR018265">
    <property type="entry name" value="Ribosomal_bL35_CS"/>
</dbReference>
<dbReference type="InterPro" id="IPR037229">
    <property type="entry name" value="Ribosomal_bL35_sf"/>
</dbReference>
<dbReference type="NCBIfam" id="TIGR00001">
    <property type="entry name" value="rpmI_bact"/>
    <property type="match status" value="1"/>
</dbReference>
<dbReference type="PANTHER" id="PTHR33343">
    <property type="entry name" value="54S RIBOSOMAL PROTEIN BL35M"/>
    <property type="match status" value="1"/>
</dbReference>
<dbReference type="PANTHER" id="PTHR33343:SF1">
    <property type="entry name" value="LARGE RIBOSOMAL SUBUNIT PROTEIN BL35M"/>
    <property type="match status" value="1"/>
</dbReference>
<dbReference type="Pfam" id="PF01632">
    <property type="entry name" value="Ribosomal_L35p"/>
    <property type="match status" value="1"/>
</dbReference>
<dbReference type="PRINTS" id="PR00064">
    <property type="entry name" value="RIBOSOMALL35"/>
</dbReference>
<dbReference type="SUPFAM" id="SSF143034">
    <property type="entry name" value="L35p-like"/>
    <property type="match status" value="1"/>
</dbReference>
<dbReference type="PROSITE" id="PS00936">
    <property type="entry name" value="RIBOSOMAL_L35"/>
    <property type="match status" value="1"/>
</dbReference>
<keyword id="KW-1185">Reference proteome</keyword>
<keyword id="KW-0687">Ribonucleoprotein</keyword>
<keyword id="KW-0689">Ribosomal protein</keyword>
<name>RL35_STRT2</name>
<gene>
    <name evidence="1" type="primary">rpmI</name>
    <name type="ordered locus">stu1133</name>
</gene>
<protein>
    <recommendedName>
        <fullName evidence="1">Large ribosomal subunit protein bL35</fullName>
    </recommendedName>
    <alternativeName>
        <fullName evidence="3">50S ribosomal protein L35</fullName>
    </alternativeName>
</protein>